<accession>Q83I62</accession>
<proteinExistence type="inferred from homology"/>
<organism>
    <name type="scientific">Tropheryma whipplei (strain TW08/27)</name>
    <name type="common">Whipple's bacillus</name>
    <dbReference type="NCBI Taxonomy" id="218496"/>
    <lineage>
        <taxon>Bacteria</taxon>
        <taxon>Bacillati</taxon>
        <taxon>Actinomycetota</taxon>
        <taxon>Actinomycetes</taxon>
        <taxon>Micrococcales</taxon>
        <taxon>Tropherymataceae</taxon>
        <taxon>Tropheryma</taxon>
    </lineage>
</organism>
<reference key="1">
    <citation type="journal article" date="2003" name="Lancet">
        <title>Sequencing and analysis of the genome of the Whipple's disease bacterium Tropheryma whipplei.</title>
        <authorList>
            <person name="Bentley S.D."/>
            <person name="Maiwald M."/>
            <person name="Murphy L.D."/>
            <person name="Pallen M.J."/>
            <person name="Yeats C.A."/>
            <person name="Dover L.G."/>
            <person name="Norbertczak H.T."/>
            <person name="Besra G.S."/>
            <person name="Quail M.A."/>
            <person name="Harris D.E."/>
            <person name="von Herbay A."/>
            <person name="Goble A."/>
            <person name="Rutter S."/>
            <person name="Squares R."/>
            <person name="Squares S."/>
            <person name="Barrell B.G."/>
            <person name="Parkhill J."/>
            <person name="Relman D.A."/>
        </authorList>
    </citation>
    <scope>NUCLEOTIDE SEQUENCE [LARGE SCALE GENOMIC DNA]</scope>
    <source>
        <strain>TW08/27</strain>
    </source>
</reference>
<comment type="function">
    <text evidence="1">With S4 and S12 plays an important role in translational accuracy.</text>
</comment>
<comment type="function">
    <text evidence="1">Located at the back of the 30S subunit body where it stabilizes the conformation of the head with respect to the body.</text>
</comment>
<comment type="subunit">
    <text evidence="1">Part of the 30S ribosomal subunit. Contacts proteins S4 and S8.</text>
</comment>
<comment type="domain">
    <text>The N-terminal domain interacts with the head of the 30S subunit; the C-terminal domain interacts with the body and contacts protein S4. The interaction surface between S4 and S5 is involved in control of translational fidelity.</text>
</comment>
<comment type="similarity">
    <text evidence="1">Belongs to the universal ribosomal protein uS5 family.</text>
</comment>
<comment type="sequence caution" evidence="3">
    <conflict type="erroneous initiation">
        <sequence resource="EMBL-CDS" id="CAD66900"/>
    </conflict>
</comment>
<feature type="chain" id="PRO_0000230379" description="Small ribosomal subunit protein uS5">
    <location>
        <begin position="1"/>
        <end position="225"/>
    </location>
</feature>
<feature type="domain" description="S5 DRBM" evidence="1">
    <location>
        <begin position="53"/>
        <end position="116"/>
    </location>
</feature>
<feature type="region of interest" description="Disordered" evidence="2">
    <location>
        <begin position="1"/>
        <end position="50"/>
    </location>
</feature>
<feature type="compositionally biased region" description="Basic residues" evidence="2">
    <location>
        <begin position="32"/>
        <end position="41"/>
    </location>
</feature>
<protein>
    <recommendedName>
        <fullName evidence="1">Small ribosomal subunit protein uS5</fullName>
    </recommendedName>
    <alternativeName>
        <fullName evidence="3">30S ribosomal protein S5</fullName>
    </alternativeName>
</protein>
<dbReference type="EMBL" id="BX251410">
    <property type="protein sequence ID" value="CAD66900.1"/>
    <property type="status" value="ALT_INIT"/>
    <property type="molecule type" value="Genomic_DNA"/>
</dbReference>
<dbReference type="RefSeq" id="WP_011096181.1">
    <property type="nucleotide sequence ID" value="NC_004551.1"/>
</dbReference>
<dbReference type="SMR" id="Q83I62"/>
<dbReference type="GeneID" id="67387999"/>
<dbReference type="KEGG" id="tws:TW223"/>
<dbReference type="HOGENOM" id="CLU_065898_1_0_11"/>
<dbReference type="GO" id="GO:0015935">
    <property type="term" value="C:small ribosomal subunit"/>
    <property type="evidence" value="ECO:0007669"/>
    <property type="project" value="InterPro"/>
</dbReference>
<dbReference type="GO" id="GO:0019843">
    <property type="term" value="F:rRNA binding"/>
    <property type="evidence" value="ECO:0007669"/>
    <property type="project" value="UniProtKB-UniRule"/>
</dbReference>
<dbReference type="GO" id="GO:0003735">
    <property type="term" value="F:structural constituent of ribosome"/>
    <property type="evidence" value="ECO:0007669"/>
    <property type="project" value="InterPro"/>
</dbReference>
<dbReference type="GO" id="GO:0006412">
    <property type="term" value="P:translation"/>
    <property type="evidence" value="ECO:0007669"/>
    <property type="project" value="UniProtKB-UniRule"/>
</dbReference>
<dbReference type="FunFam" id="3.30.160.20:FF:000001">
    <property type="entry name" value="30S ribosomal protein S5"/>
    <property type="match status" value="1"/>
</dbReference>
<dbReference type="FunFam" id="3.30.230.10:FF:000002">
    <property type="entry name" value="30S ribosomal protein S5"/>
    <property type="match status" value="1"/>
</dbReference>
<dbReference type="Gene3D" id="3.30.160.20">
    <property type="match status" value="1"/>
</dbReference>
<dbReference type="Gene3D" id="3.30.230.10">
    <property type="match status" value="1"/>
</dbReference>
<dbReference type="HAMAP" id="MF_01307_B">
    <property type="entry name" value="Ribosomal_uS5_B"/>
    <property type="match status" value="1"/>
</dbReference>
<dbReference type="InterPro" id="IPR020568">
    <property type="entry name" value="Ribosomal_Su5_D2-typ_SF"/>
</dbReference>
<dbReference type="InterPro" id="IPR000851">
    <property type="entry name" value="Ribosomal_uS5"/>
</dbReference>
<dbReference type="InterPro" id="IPR005712">
    <property type="entry name" value="Ribosomal_uS5_bac-type"/>
</dbReference>
<dbReference type="InterPro" id="IPR005324">
    <property type="entry name" value="Ribosomal_uS5_C"/>
</dbReference>
<dbReference type="InterPro" id="IPR013810">
    <property type="entry name" value="Ribosomal_uS5_N"/>
</dbReference>
<dbReference type="InterPro" id="IPR018192">
    <property type="entry name" value="Ribosomal_uS5_N_CS"/>
</dbReference>
<dbReference type="InterPro" id="IPR014721">
    <property type="entry name" value="Ribsml_uS5_D2-typ_fold_subgr"/>
</dbReference>
<dbReference type="NCBIfam" id="TIGR01021">
    <property type="entry name" value="rpsE_bact"/>
    <property type="match status" value="1"/>
</dbReference>
<dbReference type="PANTHER" id="PTHR48277">
    <property type="entry name" value="MITOCHONDRIAL RIBOSOMAL PROTEIN S5"/>
    <property type="match status" value="1"/>
</dbReference>
<dbReference type="PANTHER" id="PTHR48277:SF1">
    <property type="entry name" value="MITOCHONDRIAL RIBOSOMAL PROTEIN S5"/>
    <property type="match status" value="1"/>
</dbReference>
<dbReference type="Pfam" id="PF00333">
    <property type="entry name" value="Ribosomal_S5"/>
    <property type="match status" value="1"/>
</dbReference>
<dbReference type="Pfam" id="PF03719">
    <property type="entry name" value="Ribosomal_S5_C"/>
    <property type="match status" value="1"/>
</dbReference>
<dbReference type="SUPFAM" id="SSF54768">
    <property type="entry name" value="dsRNA-binding domain-like"/>
    <property type="match status" value="1"/>
</dbReference>
<dbReference type="SUPFAM" id="SSF54211">
    <property type="entry name" value="Ribosomal protein S5 domain 2-like"/>
    <property type="match status" value="1"/>
</dbReference>
<dbReference type="PROSITE" id="PS00585">
    <property type="entry name" value="RIBOSOMAL_S5"/>
    <property type="match status" value="1"/>
</dbReference>
<dbReference type="PROSITE" id="PS50881">
    <property type="entry name" value="S5_DSRBD"/>
    <property type="match status" value="1"/>
</dbReference>
<evidence type="ECO:0000255" key="1">
    <source>
        <dbReference type="HAMAP-Rule" id="MF_01307"/>
    </source>
</evidence>
<evidence type="ECO:0000256" key="2">
    <source>
        <dbReference type="SAM" id="MobiDB-lite"/>
    </source>
</evidence>
<evidence type="ECO:0000305" key="3"/>
<gene>
    <name evidence="1" type="primary">rpsE</name>
    <name type="ordered locus">TW223</name>
</gene>
<name>RS5_TROW8</name>
<keyword id="KW-0687">Ribonucleoprotein</keyword>
<keyword id="KW-0689">Ribosomal protein</keyword>
<keyword id="KW-0694">RNA-binding</keyword>
<keyword id="KW-0699">rRNA-binding</keyword>
<sequence length="225" mass="23532">MVRQSGSELSDQSDTDISADSDTSASQGSARHSARGRHRDSRQKGDSSSRGQFLERVVRINRVAKVVKGGRKFSFSALVVVGDGDGTVGVGYGKAREVPLAISKGIESARKNFFTVPRVASTIPHPVQGEAASGVVLLRPAAPGTGVIAGGPVRAVLECAGVRDVLSKSLGSSNSINVVYATLDALKHLEDPASVARRRGLDYYHVVPKRIVRAVNSVGASSDTA</sequence>